<keyword id="KW-0256">Endoplasmic reticulum</keyword>
<keyword id="KW-0472">Membrane</keyword>
<keyword id="KW-1185">Reference proteome</keyword>
<keyword id="KW-0808">Transferase</keyword>
<keyword id="KW-0812">Transmembrane</keyword>
<keyword id="KW-1133">Transmembrane helix</keyword>
<feature type="chain" id="PRO_0000123754" description="Dehydrodolichyl diphosphate synthase 4">
    <location>
        <begin position="1"/>
        <end position="289"/>
    </location>
</feature>
<feature type="transmembrane region" description="Helical" evidence="2">
    <location>
        <begin position="2"/>
        <end position="22"/>
    </location>
</feature>
<feature type="sequence conflict" description="In Ref. 5; AAM67372." evidence="3" ref="5">
    <original>L</original>
    <variation>F</variation>
    <location>
        <position position="216"/>
    </location>
</feature>
<organism>
    <name type="scientific">Arabidopsis thaliana</name>
    <name type="common">Mouse-ear cress</name>
    <dbReference type="NCBI Taxonomy" id="3702"/>
    <lineage>
        <taxon>Eukaryota</taxon>
        <taxon>Viridiplantae</taxon>
        <taxon>Streptophyta</taxon>
        <taxon>Embryophyta</taxon>
        <taxon>Tracheophyta</taxon>
        <taxon>Spermatophyta</taxon>
        <taxon>Magnoliopsida</taxon>
        <taxon>eudicotyledons</taxon>
        <taxon>Gunneridae</taxon>
        <taxon>Pentapetalae</taxon>
        <taxon>rosids</taxon>
        <taxon>malvids</taxon>
        <taxon>Brassicales</taxon>
        <taxon>Brassicaceae</taxon>
        <taxon>Camelineae</taxon>
        <taxon>Arabidopsis</taxon>
    </lineage>
</organism>
<protein>
    <recommendedName>
        <fullName>Dehydrodolichyl diphosphate synthase 4</fullName>
        <shortName>Dedol-PP synthase 4</shortName>
        <ecNumber>2.5.1.-</ecNumber>
    </recommendedName>
</protein>
<proteinExistence type="evidence at transcript level"/>
<sequence length="289" mass="33710">MLSMLWFLLSLLSLLLLPCLRPCFPAKGSLKNKKKIDKGTYVVGEEETPKELQRELMPRHVAVIMDGNRRWAKQTGLLTSQGYEAGAKRLLEFADLCFKLGINTVSAFAFSTENWGRHKIEVKCLMYLFQRYLKSKIQFFQSKEIRVSVIGNLAKIPESLLRTVHELEEATKSYKKKHLILAIDYSGRFDILGACKNIVKKSEQGLIREEDVDETLFERELQTRCTEFPSPDLLIRTSGEQRISNFFLWQLAYTEFFFSPVLWPDFDKQKFIEALVSYQRRDRRFGSRL</sequence>
<accession>Q8GY03</accession>
<accession>Q8LFW9</accession>
<accession>Q9LUY2</accession>
<gene>
    <name type="ordered locus">At5g58782</name>
    <name type="ORF">MZN1.23</name>
</gene>
<comment type="function">
    <text evidence="1">Catalyzes cis-prenyl chain elongation to produce the polyprenyl backbone of dolichol, a glycosyl carrier-lipid required for the biosynthesis of several classes of glycoprotein.</text>
</comment>
<comment type="cofactor">
    <cofactor evidence="1">
        <name>Mg(2+)</name>
        <dbReference type="ChEBI" id="CHEBI:18420"/>
    </cofactor>
</comment>
<comment type="pathway">
    <text>Protein modification; protein glycosylation.</text>
</comment>
<comment type="subcellular location">
    <subcellularLocation>
        <location evidence="1">Endoplasmic reticulum membrane</location>
        <topology evidence="1">Single-pass membrane protein</topology>
    </subcellularLocation>
</comment>
<comment type="similarity">
    <text evidence="3">Belongs to the UPP synthase family.</text>
</comment>
<comment type="sequence caution" evidence="3">
    <conflict type="erroneous gene model prediction">
        <sequence resource="EMBL-CDS" id="BAA97347"/>
    </conflict>
</comment>
<name>DDPS4_ARATH</name>
<reference key="1">
    <citation type="journal article" date="2000" name="DNA Res.">
        <title>Structural analysis of Arabidopsis thaliana chromosome 5. X. Sequence features of the regions of 3,076,755 bp covered by sixty P1 and TAC clones.</title>
        <authorList>
            <person name="Sato S."/>
            <person name="Nakamura Y."/>
            <person name="Kaneko T."/>
            <person name="Katoh T."/>
            <person name="Asamizu E."/>
            <person name="Kotani H."/>
            <person name="Tabata S."/>
        </authorList>
    </citation>
    <scope>NUCLEOTIDE SEQUENCE [LARGE SCALE GENOMIC DNA]</scope>
    <source>
        <strain>cv. Columbia</strain>
    </source>
</reference>
<reference key="2">
    <citation type="journal article" date="2017" name="Plant J.">
        <title>Araport11: a complete reannotation of the Arabidopsis thaliana reference genome.</title>
        <authorList>
            <person name="Cheng C.Y."/>
            <person name="Krishnakumar V."/>
            <person name="Chan A.P."/>
            <person name="Thibaud-Nissen F."/>
            <person name="Schobel S."/>
            <person name="Town C.D."/>
        </authorList>
    </citation>
    <scope>GENOME REANNOTATION</scope>
    <source>
        <strain>cv. Columbia</strain>
    </source>
</reference>
<reference key="3">
    <citation type="journal article" date="2002" name="Science">
        <title>Functional annotation of a full-length Arabidopsis cDNA collection.</title>
        <authorList>
            <person name="Seki M."/>
            <person name="Narusaka M."/>
            <person name="Kamiya A."/>
            <person name="Ishida J."/>
            <person name="Satou M."/>
            <person name="Sakurai T."/>
            <person name="Nakajima M."/>
            <person name="Enju A."/>
            <person name="Akiyama K."/>
            <person name="Oono Y."/>
            <person name="Muramatsu M."/>
            <person name="Hayashizaki Y."/>
            <person name="Kawai J."/>
            <person name="Carninci P."/>
            <person name="Itoh M."/>
            <person name="Ishii Y."/>
            <person name="Arakawa T."/>
            <person name="Shibata K."/>
            <person name="Shinagawa A."/>
            <person name="Shinozaki K."/>
        </authorList>
    </citation>
    <scope>NUCLEOTIDE SEQUENCE [LARGE SCALE MRNA]</scope>
    <source>
        <strain>cv. Columbia</strain>
    </source>
</reference>
<reference key="4">
    <citation type="journal article" date="2003" name="Science">
        <title>Empirical analysis of transcriptional activity in the Arabidopsis genome.</title>
        <authorList>
            <person name="Yamada K."/>
            <person name="Lim J."/>
            <person name="Dale J.M."/>
            <person name="Chen H."/>
            <person name="Shinn P."/>
            <person name="Palm C.J."/>
            <person name="Southwick A.M."/>
            <person name="Wu H.C."/>
            <person name="Kim C.J."/>
            <person name="Nguyen M."/>
            <person name="Pham P.K."/>
            <person name="Cheuk R.F."/>
            <person name="Karlin-Newmann G."/>
            <person name="Liu S.X."/>
            <person name="Lam B."/>
            <person name="Sakano H."/>
            <person name="Wu T."/>
            <person name="Yu G."/>
            <person name="Miranda M."/>
            <person name="Quach H.L."/>
            <person name="Tripp M."/>
            <person name="Chang C.H."/>
            <person name="Lee J.M."/>
            <person name="Toriumi M.J."/>
            <person name="Chan M.M."/>
            <person name="Tang C.C."/>
            <person name="Onodera C.S."/>
            <person name="Deng J.M."/>
            <person name="Akiyama K."/>
            <person name="Ansari Y."/>
            <person name="Arakawa T."/>
            <person name="Banh J."/>
            <person name="Banno F."/>
            <person name="Bowser L."/>
            <person name="Brooks S.Y."/>
            <person name="Carninci P."/>
            <person name="Chao Q."/>
            <person name="Choy N."/>
            <person name="Enju A."/>
            <person name="Goldsmith A.D."/>
            <person name="Gurjal M."/>
            <person name="Hansen N.F."/>
            <person name="Hayashizaki Y."/>
            <person name="Johnson-Hopson C."/>
            <person name="Hsuan V.W."/>
            <person name="Iida K."/>
            <person name="Karnes M."/>
            <person name="Khan S."/>
            <person name="Koesema E."/>
            <person name="Ishida J."/>
            <person name="Jiang P.X."/>
            <person name="Jones T."/>
            <person name="Kawai J."/>
            <person name="Kamiya A."/>
            <person name="Meyers C."/>
            <person name="Nakajima M."/>
            <person name="Narusaka M."/>
            <person name="Seki M."/>
            <person name="Sakurai T."/>
            <person name="Satou M."/>
            <person name="Tamse R."/>
            <person name="Vaysberg M."/>
            <person name="Wallender E.K."/>
            <person name="Wong C."/>
            <person name="Yamamura Y."/>
            <person name="Yuan S."/>
            <person name="Shinozaki K."/>
            <person name="Davis R.W."/>
            <person name="Theologis A."/>
            <person name="Ecker J.R."/>
        </authorList>
    </citation>
    <scope>NUCLEOTIDE SEQUENCE [LARGE SCALE MRNA]</scope>
    <source>
        <strain>cv. Columbia</strain>
    </source>
</reference>
<reference key="5">
    <citation type="submission" date="2002-03" db="EMBL/GenBank/DDBJ databases">
        <title>Full-length cDNA from Arabidopsis thaliana.</title>
        <authorList>
            <person name="Brover V.V."/>
            <person name="Troukhan M.E."/>
            <person name="Alexandrov N.A."/>
            <person name="Lu Y.-P."/>
            <person name="Flavell R.B."/>
            <person name="Feldmann K.A."/>
        </authorList>
    </citation>
    <scope>NUCLEOTIDE SEQUENCE [LARGE SCALE MRNA]</scope>
</reference>
<evidence type="ECO:0000250" key="1"/>
<evidence type="ECO:0000255" key="2"/>
<evidence type="ECO:0000305" key="3"/>
<dbReference type="EC" id="2.5.1.-"/>
<dbReference type="EMBL" id="AB020755">
    <property type="protein sequence ID" value="BAA97347.1"/>
    <property type="status" value="ALT_SEQ"/>
    <property type="molecule type" value="Genomic_DNA"/>
</dbReference>
<dbReference type="EMBL" id="CP002688">
    <property type="protein sequence ID" value="AED97098.1"/>
    <property type="molecule type" value="Genomic_DNA"/>
</dbReference>
<dbReference type="EMBL" id="AK117939">
    <property type="protein sequence ID" value="BAC42577.1"/>
    <property type="molecule type" value="mRNA"/>
</dbReference>
<dbReference type="EMBL" id="BT005285">
    <property type="protein sequence ID" value="AAO63349.1"/>
    <property type="molecule type" value="mRNA"/>
</dbReference>
<dbReference type="EMBL" id="AY084601">
    <property type="protein sequence ID" value="AAM67372.1"/>
    <property type="molecule type" value="mRNA"/>
</dbReference>
<dbReference type="SMR" id="Q8GY03"/>
<dbReference type="BioGRID" id="21237">
    <property type="interactions" value="1"/>
</dbReference>
<dbReference type="FunCoup" id="Q8GY03">
    <property type="interactions" value="17"/>
</dbReference>
<dbReference type="IntAct" id="Q8GY03">
    <property type="interactions" value="1"/>
</dbReference>
<dbReference type="STRING" id="3702.Q8GY03"/>
<dbReference type="PaxDb" id="3702-AT5G58782.1"/>
<dbReference type="ProteomicsDB" id="224043"/>
<dbReference type="EnsemblPlants" id="AT5G58782.1">
    <property type="protein sequence ID" value="AT5G58782.1"/>
    <property type="gene ID" value="AT5G58782"/>
</dbReference>
<dbReference type="Gramene" id="AT5G58782.1">
    <property type="protein sequence ID" value="AT5G58782.1"/>
    <property type="gene ID" value="AT5G58782"/>
</dbReference>
<dbReference type="KEGG" id="ath:AT5G58782"/>
<dbReference type="Araport" id="AT5G58782"/>
<dbReference type="TAIR" id="AT5G58782">
    <property type="gene designation" value="CPT6"/>
</dbReference>
<dbReference type="eggNOG" id="KOG1602">
    <property type="taxonomic scope" value="Eukaryota"/>
</dbReference>
<dbReference type="HOGENOM" id="CLU_038505_1_0_1"/>
<dbReference type="InParanoid" id="Q8GY03"/>
<dbReference type="OMA" id="NRPKART"/>
<dbReference type="PhylomeDB" id="Q8GY03"/>
<dbReference type="UniPathway" id="UPA00378"/>
<dbReference type="PRO" id="PR:Q8GY03"/>
<dbReference type="Proteomes" id="UP000006548">
    <property type="component" value="Chromosome 5"/>
</dbReference>
<dbReference type="ExpressionAtlas" id="Q8GY03">
    <property type="expression patterns" value="baseline and differential"/>
</dbReference>
<dbReference type="GO" id="GO:0005789">
    <property type="term" value="C:endoplasmic reticulum membrane"/>
    <property type="evidence" value="ECO:0007669"/>
    <property type="project" value="UniProtKB-SubCell"/>
</dbReference>
<dbReference type="GO" id="GO:0016765">
    <property type="term" value="F:transferase activity, transferring alkyl or aryl (other than methyl) groups"/>
    <property type="evidence" value="ECO:0007669"/>
    <property type="project" value="InterPro"/>
</dbReference>
<dbReference type="GO" id="GO:0006486">
    <property type="term" value="P:protein glycosylation"/>
    <property type="evidence" value="ECO:0007669"/>
    <property type="project" value="UniProtKB-UniPathway"/>
</dbReference>
<dbReference type="CDD" id="cd00475">
    <property type="entry name" value="Cis_IPPS"/>
    <property type="match status" value="1"/>
</dbReference>
<dbReference type="FunFam" id="3.40.1180.10:FF:000001">
    <property type="entry name" value="(2E,6E)-farnesyl-diphosphate-specific ditrans,polycis-undecaprenyl-diphosphate synthase"/>
    <property type="match status" value="1"/>
</dbReference>
<dbReference type="Gene3D" id="3.40.1180.10">
    <property type="entry name" value="Decaprenyl diphosphate synthase-like"/>
    <property type="match status" value="1"/>
</dbReference>
<dbReference type="HAMAP" id="MF_01139">
    <property type="entry name" value="ISPT"/>
    <property type="match status" value="1"/>
</dbReference>
<dbReference type="InterPro" id="IPR001441">
    <property type="entry name" value="UPP_synth-like"/>
</dbReference>
<dbReference type="InterPro" id="IPR018520">
    <property type="entry name" value="UPP_synth-like_CS"/>
</dbReference>
<dbReference type="InterPro" id="IPR036424">
    <property type="entry name" value="UPP_synth-like_sf"/>
</dbReference>
<dbReference type="NCBIfam" id="TIGR00055">
    <property type="entry name" value="uppS"/>
    <property type="match status" value="1"/>
</dbReference>
<dbReference type="PANTHER" id="PTHR10291:SF25">
    <property type="entry name" value="ALKYL TRANSFERASE-RELATED"/>
    <property type="match status" value="1"/>
</dbReference>
<dbReference type="PANTHER" id="PTHR10291">
    <property type="entry name" value="DEHYDRODOLICHYL DIPHOSPHATE SYNTHASE FAMILY MEMBER"/>
    <property type="match status" value="1"/>
</dbReference>
<dbReference type="Pfam" id="PF01255">
    <property type="entry name" value="Prenyltransf"/>
    <property type="match status" value="1"/>
</dbReference>
<dbReference type="SUPFAM" id="SSF64005">
    <property type="entry name" value="Undecaprenyl diphosphate synthase"/>
    <property type="match status" value="1"/>
</dbReference>
<dbReference type="PROSITE" id="PS01066">
    <property type="entry name" value="UPP_SYNTHASE"/>
    <property type="match status" value="1"/>
</dbReference>